<feature type="chain" id="PRO_0000376344" description="NADH-quinone oxidoreductase subunit B">
    <location>
        <begin position="1"/>
        <end position="208"/>
    </location>
</feature>
<feature type="region of interest" description="Disordered" evidence="2">
    <location>
        <begin position="180"/>
        <end position="208"/>
    </location>
</feature>
<feature type="compositionally biased region" description="Basic and acidic residues" evidence="2">
    <location>
        <begin position="185"/>
        <end position="196"/>
    </location>
</feature>
<feature type="binding site" evidence="1">
    <location>
        <position position="51"/>
    </location>
    <ligand>
        <name>[4Fe-4S] cluster</name>
        <dbReference type="ChEBI" id="CHEBI:49883"/>
    </ligand>
</feature>
<feature type="binding site" evidence="1">
    <location>
        <position position="52"/>
    </location>
    <ligand>
        <name>[4Fe-4S] cluster</name>
        <dbReference type="ChEBI" id="CHEBI:49883"/>
    </ligand>
</feature>
<feature type="binding site" evidence="1">
    <location>
        <position position="117"/>
    </location>
    <ligand>
        <name>[4Fe-4S] cluster</name>
        <dbReference type="ChEBI" id="CHEBI:49883"/>
    </ligand>
</feature>
<feature type="binding site" evidence="1">
    <location>
        <position position="146"/>
    </location>
    <ligand>
        <name>[4Fe-4S] cluster</name>
        <dbReference type="ChEBI" id="CHEBI:49883"/>
    </ligand>
</feature>
<dbReference type="EC" id="7.1.1.-" evidence="1"/>
<dbReference type="EMBL" id="CP000250">
    <property type="protein sequence ID" value="ABD06058.1"/>
    <property type="molecule type" value="Genomic_DNA"/>
</dbReference>
<dbReference type="RefSeq" id="WP_011440246.1">
    <property type="nucleotide sequence ID" value="NC_007778.1"/>
</dbReference>
<dbReference type="SMR" id="Q2J0F2"/>
<dbReference type="STRING" id="316058.RPB_1348"/>
<dbReference type="KEGG" id="rpb:RPB_1348"/>
<dbReference type="eggNOG" id="COG0377">
    <property type="taxonomic scope" value="Bacteria"/>
</dbReference>
<dbReference type="HOGENOM" id="CLU_055737_7_3_5"/>
<dbReference type="OrthoDB" id="9786737at2"/>
<dbReference type="Proteomes" id="UP000008809">
    <property type="component" value="Chromosome"/>
</dbReference>
<dbReference type="GO" id="GO:0005886">
    <property type="term" value="C:plasma membrane"/>
    <property type="evidence" value="ECO:0007669"/>
    <property type="project" value="UniProtKB-SubCell"/>
</dbReference>
<dbReference type="GO" id="GO:0045271">
    <property type="term" value="C:respiratory chain complex I"/>
    <property type="evidence" value="ECO:0007669"/>
    <property type="project" value="TreeGrafter"/>
</dbReference>
<dbReference type="GO" id="GO:0051539">
    <property type="term" value="F:4 iron, 4 sulfur cluster binding"/>
    <property type="evidence" value="ECO:0007669"/>
    <property type="project" value="UniProtKB-KW"/>
</dbReference>
<dbReference type="GO" id="GO:0005506">
    <property type="term" value="F:iron ion binding"/>
    <property type="evidence" value="ECO:0007669"/>
    <property type="project" value="UniProtKB-UniRule"/>
</dbReference>
<dbReference type="GO" id="GO:0008137">
    <property type="term" value="F:NADH dehydrogenase (ubiquinone) activity"/>
    <property type="evidence" value="ECO:0007669"/>
    <property type="project" value="InterPro"/>
</dbReference>
<dbReference type="GO" id="GO:0050136">
    <property type="term" value="F:NADH:ubiquinone reductase (non-electrogenic) activity"/>
    <property type="evidence" value="ECO:0007669"/>
    <property type="project" value="UniProtKB-UniRule"/>
</dbReference>
<dbReference type="GO" id="GO:0048038">
    <property type="term" value="F:quinone binding"/>
    <property type="evidence" value="ECO:0007669"/>
    <property type="project" value="UniProtKB-KW"/>
</dbReference>
<dbReference type="GO" id="GO:0009060">
    <property type="term" value="P:aerobic respiration"/>
    <property type="evidence" value="ECO:0007669"/>
    <property type="project" value="TreeGrafter"/>
</dbReference>
<dbReference type="GO" id="GO:0015990">
    <property type="term" value="P:electron transport coupled proton transport"/>
    <property type="evidence" value="ECO:0007669"/>
    <property type="project" value="TreeGrafter"/>
</dbReference>
<dbReference type="FunFam" id="3.40.50.12280:FF:000002">
    <property type="entry name" value="NADH-quinone oxidoreductase subunit B"/>
    <property type="match status" value="1"/>
</dbReference>
<dbReference type="Gene3D" id="3.40.50.12280">
    <property type="match status" value="1"/>
</dbReference>
<dbReference type="HAMAP" id="MF_01356">
    <property type="entry name" value="NDH1_NuoB"/>
    <property type="match status" value="1"/>
</dbReference>
<dbReference type="InterPro" id="IPR006137">
    <property type="entry name" value="NADH_UbQ_OxRdtase-like_20kDa"/>
</dbReference>
<dbReference type="InterPro" id="IPR006138">
    <property type="entry name" value="NADH_UQ_OxRdtase_20Kd_su"/>
</dbReference>
<dbReference type="NCBIfam" id="TIGR01957">
    <property type="entry name" value="nuoB_fam"/>
    <property type="match status" value="1"/>
</dbReference>
<dbReference type="NCBIfam" id="NF005012">
    <property type="entry name" value="PRK06411.1"/>
    <property type="match status" value="1"/>
</dbReference>
<dbReference type="PANTHER" id="PTHR11995">
    <property type="entry name" value="NADH DEHYDROGENASE"/>
    <property type="match status" value="1"/>
</dbReference>
<dbReference type="PANTHER" id="PTHR11995:SF14">
    <property type="entry name" value="NADH DEHYDROGENASE [UBIQUINONE] IRON-SULFUR PROTEIN 7, MITOCHONDRIAL"/>
    <property type="match status" value="1"/>
</dbReference>
<dbReference type="Pfam" id="PF01058">
    <property type="entry name" value="Oxidored_q6"/>
    <property type="match status" value="1"/>
</dbReference>
<dbReference type="SUPFAM" id="SSF56770">
    <property type="entry name" value="HydA/Nqo6-like"/>
    <property type="match status" value="1"/>
</dbReference>
<dbReference type="PROSITE" id="PS01150">
    <property type="entry name" value="COMPLEX1_20K"/>
    <property type="match status" value="1"/>
</dbReference>
<evidence type="ECO:0000255" key="1">
    <source>
        <dbReference type="HAMAP-Rule" id="MF_01356"/>
    </source>
</evidence>
<evidence type="ECO:0000256" key="2">
    <source>
        <dbReference type="SAM" id="MobiDB-lite"/>
    </source>
</evidence>
<sequence>MTDLPPHALQPAEPVSVEQHMALSSLFTTLEDLTAWSRKHSLWPFNFGLSCCYVEQVTALTPVYDQARFGAEVIRASPRQADLLVVSGTVFHKMAAPLLRLYEQMRAPRWVIAMGACACSGGMYDIYSVVQGVDRFIPVDVYIPGCPPRPEAMLDALIMLQQQVGSERRPLGVTVGNSAGLGFDAPRRRDERHDQRMAQTLLDPPETL</sequence>
<gene>
    <name evidence="1" type="primary">nuoB</name>
    <name type="ordered locus">RPB_1348</name>
</gene>
<comment type="function">
    <text evidence="1">NDH-1 shuttles electrons from NADH, via FMN and iron-sulfur (Fe-S) centers, to quinones in the respiratory chain. The immediate electron acceptor for the enzyme in this species is believed to be ubiquinone. Couples the redox reaction to proton translocation (for every two electrons transferred, four hydrogen ions are translocated across the cytoplasmic membrane), and thus conserves the redox energy in a proton gradient.</text>
</comment>
<comment type="catalytic activity">
    <reaction evidence="1">
        <text>a quinone + NADH + 5 H(+)(in) = a quinol + NAD(+) + 4 H(+)(out)</text>
        <dbReference type="Rhea" id="RHEA:57888"/>
        <dbReference type="ChEBI" id="CHEBI:15378"/>
        <dbReference type="ChEBI" id="CHEBI:24646"/>
        <dbReference type="ChEBI" id="CHEBI:57540"/>
        <dbReference type="ChEBI" id="CHEBI:57945"/>
        <dbReference type="ChEBI" id="CHEBI:132124"/>
    </reaction>
</comment>
<comment type="cofactor">
    <cofactor evidence="1">
        <name>[4Fe-4S] cluster</name>
        <dbReference type="ChEBI" id="CHEBI:49883"/>
    </cofactor>
    <text evidence="1">Binds 1 [4Fe-4S] cluster.</text>
</comment>
<comment type="subunit">
    <text evidence="1">NDH-1 is composed of 14 different subunits. Subunits NuoB, C, D, E, F, and G constitute the peripheral sector of the complex.</text>
</comment>
<comment type="subcellular location">
    <subcellularLocation>
        <location evidence="1">Cell inner membrane</location>
        <topology evidence="1">Peripheral membrane protein</topology>
        <orientation evidence="1">Cytoplasmic side</orientation>
    </subcellularLocation>
</comment>
<comment type="similarity">
    <text evidence="1">Belongs to the complex I 20 kDa subunit family.</text>
</comment>
<organism>
    <name type="scientific">Rhodopseudomonas palustris (strain HaA2)</name>
    <dbReference type="NCBI Taxonomy" id="316058"/>
    <lineage>
        <taxon>Bacteria</taxon>
        <taxon>Pseudomonadati</taxon>
        <taxon>Pseudomonadota</taxon>
        <taxon>Alphaproteobacteria</taxon>
        <taxon>Hyphomicrobiales</taxon>
        <taxon>Nitrobacteraceae</taxon>
        <taxon>Rhodopseudomonas</taxon>
    </lineage>
</organism>
<keyword id="KW-0004">4Fe-4S</keyword>
<keyword id="KW-0997">Cell inner membrane</keyword>
<keyword id="KW-1003">Cell membrane</keyword>
<keyword id="KW-0408">Iron</keyword>
<keyword id="KW-0411">Iron-sulfur</keyword>
<keyword id="KW-0472">Membrane</keyword>
<keyword id="KW-0479">Metal-binding</keyword>
<keyword id="KW-0520">NAD</keyword>
<keyword id="KW-0874">Quinone</keyword>
<keyword id="KW-1185">Reference proteome</keyword>
<keyword id="KW-1278">Translocase</keyword>
<keyword id="KW-0813">Transport</keyword>
<keyword id="KW-0830">Ubiquinone</keyword>
<name>NUOB_RHOP2</name>
<proteinExistence type="inferred from homology"/>
<accession>Q2J0F2</accession>
<reference key="1">
    <citation type="submission" date="2006-01" db="EMBL/GenBank/DDBJ databases">
        <title>Complete sequence of Rhodopseudomonas palustris HaA2.</title>
        <authorList>
            <consortium name="US DOE Joint Genome Institute"/>
            <person name="Copeland A."/>
            <person name="Lucas S."/>
            <person name="Lapidus A."/>
            <person name="Barry K."/>
            <person name="Detter J.C."/>
            <person name="Glavina T."/>
            <person name="Hammon N."/>
            <person name="Israni S."/>
            <person name="Pitluck S."/>
            <person name="Chain P."/>
            <person name="Malfatti S."/>
            <person name="Shin M."/>
            <person name="Vergez L."/>
            <person name="Schmutz J."/>
            <person name="Larimer F."/>
            <person name="Land M."/>
            <person name="Hauser L."/>
            <person name="Pelletier D.A."/>
            <person name="Kyrpides N."/>
            <person name="Anderson I."/>
            <person name="Oda Y."/>
            <person name="Harwood C.S."/>
            <person name="Richardson P."/>
        </authorList>
    </citation>
    <scope>NUCLEOTIDE SEQUENCE [LARGE SCALE GENOMIC DNA]</scope>
    <source>
        <strain>HaA2</strain>
    </source>
</reference>
<protein>
    <recommendedName>
        <fullName evidence="1">NADH-quinone oxidoreductase subunit B</fullName>
        <ecNumber evidence="1">7.1.1.-</ecNumber>
    </recommendedName>
    <alternativeName>
        <fullName evidence="1">NADH dehydrogenase I subunit B</fullName>
    </alternativeName>
    <alternativeName>
        <fullName evidence="1">NDH-1 subunit B</fullName>
    </alternativeName>
</protein>